<feature type="chain" id="PRO_1000085516" description="D-amino acid dehydrogenase">
    <location>
        <begin position="1"/>
        <end position="432"/>
    </location>
</feature>
<feature type="binding site" evidence="1">
    <location>
        <begin position="3"/>
        <end position="17"/>
    </location>
    <ligand>
        <name>FAD</name>
        <dbReference type="ChEBI" id="CHEBI:57692"/>
    </ligand>
</feature>
<sequence length="432" mass="47883">MRVVILGSGVVGVTSAWYLSQAGHDVTVIDRESGPAQETSAANAGQISPGYAAPWAAPGVPLKAIKWMFQRHAPLAVRLDGTPFQLKWMWQMLRNCDTRHYMENKGRMVRLAEYSRDCLKTLRAATGIEYEGRQGGTLQLFRTAQQYENATRDIAVLEDAGVPYQLLESSRLAEVEPALAEVAHKLTGGLRLPNDETGDCQLFTQRLARMAEQAGVTFRFNTPVEKLLYENDQIYGVKCADEIIKADAYVMAFGSYSTAMLKGIVDIPVYPLKGYSLTIPIVEPDGAPVSTILDETYKIAITRFDKRIRVGGMAEIVGFNTDLLQPRRETLEMVVRDLFPRGGHIEQATFWTGLRPMTPDGTPVVGRTRYKNLWLNTGHGTLGWTMACGSGQLLSDILSGRTPAIPYDDLSVARYRSDFTPTPPQRLHSAHN</sequence>
<evidence type="ECO:0000255" key="1">
    <source>
        <dbReference type="HAMAP-Rule" id="MF_01202"/>
    </source>
</evidence>
<gene>
    <name evidence="1" type="primary">dadA</name>
    <name type="ordered locus">SPAB_01416</name>
</gene>
<comment type="function">
    <text evidence="1">Oxidative deamination of D-amino acids.</text>
</comment>
<comment type="catalytic activity">
    <reaction evidence="1">
        <text>a D-alpha-amino acid + A + H2O = a 2-oxocarboxylate + AH2 + NH4(+)</text>
        <dbReference type="Rhea" id="RHEA:18125"/>
        <dbReference type="ChEBI" id="CHEBI:13193"/>
        <dbReference type="ChEBI" id="CHEBI:15377"/>
        <dbReference type="ChEBI" id="CHEBI:17499"/>
        <dbReference type="ChEBI" id="CHEBI:28938"/>
        <dbReference type="ChEBI" id="CHEBI:35179"/>
        <dbReference type="ChEBI" id="CHEBI:59871"/>
    </reaction>
</comment>
<comment type="cofactor">
    <cofactor evidence="1">
        <name>FAD</name>
        <dbReference type="ChEBI" id="CHEBI:57692"/>
    </cofactor>
</comment>
<comment type="pathway">
    <text>Amino-acid degradation; D-alanine degradation; NH(3) and pyruvate from D-alanine: step 1/1.</text>
</comment>
<comment type="similarity">
    <text evidence="1">Belongs to the DadA oxidoreductase family.</text>
</comment>
<proteinExistence type="inferred from homology"/>
<organism>
    <name type="scientific">Salmonella paratyphi B (strain ATCC BAA-1250 / SPB7)</name>
    <dbReference type="NCBI Taxonomy" id="1016998"/>
    <lineage>
        <taxon>Bacteria</taxon>
        <taxon>Pseudomonadati</taxon>
        <taxon>Pseudomonadota</taxon>
        <taxon>Gammaproteobacteria</taxon>
        <taxon>Enterobacterales</taxon>
        <taxon>Enterobacteriaceae</taxon>
        <taxon>Salmonella</taxon>
    </lineage>
</organism>
<keyword id="KW-0274">FAD</keyword>
<keyword id="KW-0285">Flavoprotein</keyword>
<keyword id="KW-0560">Oxidoreductase</keyword>
<protein>
    <recommendedName>
        <fullName evidence="1">D-amino acid dehydrogenase</fullName>
        <ecNumber evidence="1">1.4.99.-</ecNumber>
    </recommendedName>
</protein>
<accession>A9MVW7</accession>
<reference key="1">
    <citation type="submission" date="2007-11" db="EMBL/GenBank/DDBJ databases">
        <authorList>
            <consortium name="The Salmonella enterica serovar Paratyphi B Genome Sequencing Project"/>
            <person name="McClelland M."/>
            <person name="Sanderson E.K."/>
            <person name="Porwollik S."/>
            <person name="Spieth J."/>
            <person name="Clifton W.S."/>
            <person name="Fulton R."/>
            <person name="Cordes M."/>
            <person name="Wollam A."/>
            <person name="Shah N."/>
            <person name="Pepin K."/>
            <person name="Bhonagiri V."/>
            <person name="Nash W."/>
            <person name="Johnson M."/>
            <person name="Thiruvilangam P."/>
            <person name="Wilson R."/>
        </authorList>
    </citation>
    <scope>NUCLEOTIDE SEQUENCE [LARGE SCALE GENOMIC DNA]</scope>
    <source>
        <strain>ATCC BAA-1250 / SPB7</strain>
    </source>
</reference>
<name>DADA_SALPB</name>
<dbReference type="EC" id="1.4.99.-" evidence="1"/>
<dbReference type="EMBL" id="CP000886">
    <property type="protein sequence ID" value="ABX66823.1"/>
    <property type="molecule type" value="Genomic_DNA"/>
</dbReference>
<dbReference type="RefSeq" id="WP_001266937.1">
    <property type="nucleotide sequence ID" value="NC_010102.1"/>
</dbReference>
<dbReference type="SMR" id="A9MVW7"/>
<dbReference type="KEGG" id="spq:SPAB_01416"/>
<dbReference type="PATRIC" id="fig|1016998.12.peg.1335"/>
<dbReference type="HOGENOM" id="CLU_007884_9_2_6"/>
<dbReference type="BioCyc" id="SENT1016998:SPAB_RS05795-MONOMER"/>
<dbReference type="UniPathway" id="UPA00043">
    <property type="reaction ID" value="UER00498"/>
</dbReference>
<dbReference type="Proteomes" id="UP000008556">
    <property type="component" value="Chromosome"/>
</dbReference>
<dbReference type="GO" id="GO:0005737">
    <property type="term" value="C:cytoplasm"/>
    <property type="evidence" value="ECO:0007669"/>
    <property type="project" value="TreeGrafter"/>
</dbReference>
<dbReference type="GO" id="GO:0005886">
    <property type="term" value="C:plasma membrane"/>
    <property type="evidence" value="ECO:0007669"/>
    <property type="project" value="TreeGrafter"/>
</dbReference>
<dbReference type="GO" id="GO:0008718">
    <property type="term" value="F:D-amino-acid dehydrogenase activity"/>
    <property type="evidence" value="ECO:0007669"/>
    <property type="project" value="UniProtKB-UniRule"/>
</dbReference>
<dbReference type="GO" id="GO:0055130">
    <property type="term" value="P:D-alanine catabolic process"/>
    <property type="evidence" value="ECO:0007669"/>
    <property type="project" value="UniProtKB-UniPathway"/>
</dbReference>
<dbReference type="FunFam" id="3.50.50.60:FF:000020">
    <property type="entry name" value="D-amino acid dehydrogenase"/>
    <property type="match status" value="1"/>
</dbReference>
<dbReference type="Gene3D" id="3.30.9.10">
    <property type="entry name" value="D-Amino Acid Oxidase, subunit A, domain 2"/>
    <property type="match status" value="1"/>
</dbReference>
<dbReference type="Gene3D" id="3.50.50.60">
    <property type="entry name" value="FAD/NAD(P)-binding domain"/>
    <property type="match status" value="2"/>
</dbReference>
<dbReference type="HAMAP" id="MF_01202">
    <property type="entry name" value="DadA"/>
    <property type="match status" value="1"/>
</dbReference>
<dbReference type="InterPro" id="IPR023080">
    <property type="entry name" value="DadA"/>
</dbReference>
<dbReference type="InterPro" id="IPR006076">
    <property type="entry name" value="FAD-dep_OxRdtase"/>
</dbReference>
<dbReference type="InterPro" id="IPR036188">
    <property type="entry name" value="FAD/NAD-bd_sf"/>
</dbReference>
<dbReference type="NCBIfam" id="NF001933">
    <property type="entry name" value="PRK00711.1"/>
    <property type="match status" value="1"/>
</dbReference>
<dbReference type="PANTHER" id="PTHR13847:SF280">
    <property type="entry name" value="D-AMINO ACID DEHYDROGENASE"/>
    <property type="match status" value="1"/>
</dbReference>
<dbReference type="PANTHER" id="PTHR13847">
    <property type="entry name" value="SARCOSINE DEHYDROGENASE-RELATED"/>
    <property type="match status" value="1"/>
</dbReference>
<dbReference type="Pfam" id="PF01266">
    <property type="entry name" value="DAO"/>
    <property type="match status" value="1"/>
</dbReference>
<dbReference type="SUPFAM" id="SSF54373">
    <property type="entry name" value="FAD-linked reductases, C-terminal domain"/>
    <property type="match status" value="1"/>
</dbReference>
<dbReference type="SUPFAM" id="SSF51905">
    <property type="entry name" value="FAD/NAD(P)-binding domain"/>
    <property type="match status" value="1"/>
</dbReference>